<reference key="1">
    <citation type="journal article" date="2004" name="Genome Res.">
        <title>The status, quality, and expansion of the NIH full-length cDNA project: the Mammalian Gene Collection (MGC).</title>
        <authorList>
            <consortium name="The MGC Project Team"/>
        </authorList>
    </citation>
    <scope>NUCLEOTIDE SEQUENCE [LARGE SCALE MRNA]</scope>
    <source>
        <tissue>Placenta</tissue>
    </source>
</reference>
<evidence type="ECO:0000250" key="1">
    <source>
        <dbReference type="UniProtKB" id="Q61142"/>
    </source>
</evidence>
<evidence type="ECO:0000250" key="2">
    <source>
        <dbReference type="UniProtKB" id="Q9Y657"/>
    </source>
</evidence>
<evidence type="ECO:0000256" key="3">
    <source>
        <dbReference type="SAM" id="MobiDB-lite"/>
    </source>
</evidence>
<evidence type="ECO:0000305" key="4"/>
<gene>
    <name type="primary">Spin1</name>
    <name type="synonym">Spin</name>
</gene>
<proteinExistence type="evidence at transcript level"/>
<accession>Q4V8J7</accession>
<feature type="chain" id="PRO_0000232667" description="Spindlin-1">
    <location>
        <begin position="1"/>
        <end position="262"/>
    </location>
</feature>
<feature type="region of interest" description="Disordered" evidence="3">
    <location>
        <begin position="1"/>
        <end position="49"/>
    </location>
</feature>
<feature type="region of interest" description="Tudor-like domain 1" evidence="2">
    <location>
        <begin position="53"/>
        <end position="116"/>
    </location>
</feature>
<feature type="region of interest" description="Histone H3K4me3 and H3R8me2a binding" evidence="2">
    <location>
        <begin position="93"/>
        <end position="98"/>
    </location>
</feature>
<feature type="region of interest" description="Tudor-like domain 2" evidence="2">
    <location>
        <begin position="132"/>
        <end position="193"/>
    </location>
</feature>
<feature type="region of interest" description="Histone H3K4me3 and H3R8me2a binding" evidence="2">
    <location>
        <position position="142"/>
    </location>
</feature>
<feature type="region of interest" description="Tudor-like domain 3" evidence="2">
    <location>
        <begin position="213"/>
        <end position="262"/>
    </location>
</feature>
<feature type="region of interest" description="Histone H3K4me3 and H3R8me2a binding" evidence="2">
    <location>
        <begin position="250"/>
        <end position="252"/>
    </location>
</feature>
<feature type="compositionally biased region" description="Basic residues" evidence="3">
    <location>
        <begin position="27"/>
        <end position="38"/>
    </location>
</feature>
<feature type="site" description="Histone H3K4me3 and H3R8me2a binding" evidence="2">
    <location>
        <position position="173"/>
    </location>
</feature>
<feature type="site" description="Histone H3K4me3 and H3R8me2a binding" evidence="2">
    <location>
        <position position="180"/>
    </location>
</feature>
<feature type="site" description="Histone H3K4me3 and H3R8me2a binding" evidence="2">
    <location>
        <position position="184"/>
    </location>
</feature>
<feature type="modified residue" description="N6-acetyllysine; alternate" evidence="1">
    <location>
        <position position="44"/>
    </location>
</feature>
<feature type="modified residue" description="Phosphoserine; by AURKA" evidence="2">
    <location>
        <position position="109"/>
    </location>
</feature>
<feature type="modified residue" description="Phosphoserine; by AURKA" evidence="2">
    <location>
        <position position="124"/>
    </location>
</feature>
<feature type="modified residue" description="Phosphoserine" evidence="2">
    <location>
        <position position="199"/>
    </location>
</feature>
<feature type="cross-link" description="Glycyl lysine isopeptide (Lys-Gly) (interchain with G-Cter in SUMO2)" evidence="2">
    <location>
        <position position="7"/>
    </location>
</feature>
<feature type="cross-link" description="Glycyl lysine isopeptide (Lys-Gly) (interchain with G-Cter in SUMO2)" evidence="2">
    <location>
        <position position="28"/>
    </location>
</feature>
<feature type="cross-link" description="Glycyl lysine isopeptide (Lys-Gly) (interchain with G-Cter in SUMO2); alternate" evidence="2">
    <location>
        <position position="44"/>
    </location>
</feature>
<name>SPIN1_RAT</name>
<keyword id="KW-0007">Acetylation</keyword>
<keyword id="KW-0131">Cell cycle</keyword>
<keyword id="KW-0156">Chromatin regulator</keyword>
<keyword id="KW-0217">Developmental protein</keyword>
<keyword id="KW-0238">DNA-binding</keyword>
<keyword id="KW-1017">Isopeptide bond</keyword>
<keyword id="KW-0469">Meiosis</keyword>
<keyword id="KW-0539">Nucleus</keyword>
<keyword id="KW-0597">Phosphoprotein</keyword>
<keyword id="KW-1185">Reference proteome</keyword>
<keyword id="KW-0677">Repeat</keyword>
<keyword id="KW-0832">Ubl conjugation</keyword>
<keyword id="KW-0879">Wnt signaling pathway</keyword>
<dbReference type="EMBL" id="BC097359">
    <property type="protein sequence ID" value="AAH97359.1"/>
    <property type="molecule type" value="mRNA"/>
</dbReference>
<dbReference type="RefSeq" id="NP_001019967.1">
    <property type="nucleotide sequence ID" value="NM_001024796.2"/>
</dbReference>
<dbReference type="RefSeq" id="NP_001406072.1">
    <property type="nucleotide sequence ID" value="NM_001419143.1"/>
</dbReference>
<dbReference type="RefSeq" id="XP_008769237.1">
    <property type="nucleotide sequence ID" value="XM_008771015.2"/>
</dbReference>
<dbReference type="RefSeq" id="XP_017443172.1">
    <property type="nucleotide sequence ID" value="XM_017587683.1"/>
</dbReference>
<dbReference type="RefSeq" id="XP_017443173.1">
    <property type="nucleotide sequence ID" value="XM_017587684.1"/>
</dbReference>
<dbReference type="RefSeq" id="XP_063132629.1">
    <property type="nucleotide sequence ID" value="XM_063276559.1"/>
</dbReference>
<dbReference type="RefSeq" id="XP_063132630.1">
    <property type="nucleotide sequence ID" value="XM_063276560.1"/>
</dbReference>
<dbReference type="SMR" id="Q4V8J7"/>
<dbReference type="FunCoup" id="Q4V8J7">
    <property type="interactions" value="2293"/>
</dbReference>
<dbReference type="STRING" id="10116.ENSRNOP00000014787"/>
<dbReference type="iPTMnet" id="Q4V8J7"/>
<dbReference type="PhosphoSitePlus" id="Q4V8J7"/>
<dbReference type="PaxDb" id="10116-ENSRNOP00000014787"/>
<dbReference type="Ensembl" id="ENSRNOT00000095885.1">
    <property type="protein sequence ID" value="ENSRNOP00000088564.1"/>
    <property type="gene ID" value="ENSRNOG00000067284.1"/>
</dbReference>
<dbReference type="GeneID" id="361217"/>
<dbReference type="KEGG" id="rno:361217"/>
<dbReference type="AGR" id="RGD:1306210"/>
<dbReference type="CTD" id="10927"/>
<dbReference type="RGD" id="1306210">
    <property type="gene designation" value="Spin1"/>
</dbReference>
<dbReference type="eggNOG" id="ENOG502QRYD">
    <property type="taxonomic scope" value="Eukaryota"/>
</dbReference>
<dbReference type="GeneTree" id="ENSGT00950000182925"/>
<dbReference type="HOGENOM" id="CLU_068595_0_0_1"/>
<dbReference type="InParanoid" id="Q4V8J7"/>
<dbReference type="OMA" id="CMCEYRK"/>
<dbReference type="OrthoDB" id="9944558at2759"/>
<dbReference type="PhylomeDB" id="Q4V8J7"/>
<dbReference type="TreeFam" id="TF332665"/>
<dbReference type="PRO" id="PR:Q4V8J7"/>
<dbReference type="Proteomes" id="UP000002494">
    <property type="component" value="Chromosome 17"/>
</dbReference>
<dbReference type="Bgee" id="ENSRNOG00000011119">
    <property type="expression patterns" value="Expressed in frontal cortex and 18 other cell types or tissues"/>
</dbReference>
<dbReference type="GO" id="GO:0000785">
    <property type="term" value="C:chromatin"/>
    <property type="evidence" value="ECO:0000250"/>
    <property type="project" value="UniProtKB"/>
</dbReference>
<dbReference type="GO" id="GO:0005829">
    <property type="term" value="C:cytosol"/>
    <property type="evidence" value="ECO:0000318"/>
    <property type="project" value="GO_Central"/>
</dbReference>
<dbReference type="GO" id="GO:0005730">
    <property type="term" value="C:nucleolus"/>
    <property type="evidence" value="ECO:0000250"/>
    <property type="project" value="UniProtKB"/>
</dbReference>
<dbReference type="GO" id="GO:0005654">
    <property type="term" value="C:nucleoplasm"/>
    <property type="evidence" value="ECO:0000318"/>
    <property type="project" value="GO_Central"/>
</dbReference>
<dbReference type="GO" id="GO:0005634">
    <property type="term" value="C:nucleus"/>
    <property type="evidence" value="ECO:0000250"/>
    <property type="project" value="UniProtKB"/>
</dbReference>
<dbReference type="GO" id="GO:0005819">
    <property type="term" value="C:spindle"/>
    <property type="evidence" value="ECO:0000266"/>
    <property type="project" value="RGD"/>
</dbReference>
<dbReference type="GO" id="GO:0003677">
    <property type="term" value="F:DNA binding"/>
    <property type="evidence" value="ECO:0007669"/>
    <property type="project" value="UniProtKB-KW"/>
</dbReference>
<dbReference type="GO" id="GO:0140002">
    <property type="term" value="F:histone H3K4me3 reader activity"/>
    <property type="evidence" value="ECO:0000250"/>
    <property type="project" value="UniProtKB"/>
</dbReference>
<dbReference type="GO" id="GO:0140566">
    <property type="term" value="F:histone reader activity"/>
    <property type="evidence" value="ECO:0000250"/>
    <property type="project" value="UniProtKB"/>
</dbReference>
<dbReference type="GO" id="GO:0035064">
    <property type="term" value="F:methylated histone binding"/>
    <property type="evidence" value="ECO:0000250"/>
    <property type="project" value="UniProtKB"/>
</dbReference>
<dbReference type="GO" id="GO:0007276">
    <property type="term" value="P:gamete generation"/>
    <property type="evidence" value="ECO:0007669"/>
    <property type="project" value="InterPro"/>
</dbReference>
<dbReference type="GO" id="GO:0051321">
    <property type="term" value="P:meiotic cell cycle"/>
    <property type="evidence" value="ECO:0007669"/>
    <property type="project" value="UniProtKB-KW"/>
</dbReference>
<dbReference type="GO" id="GO:0045893">
    <property type="term" value="P:positive regulation of DNA-templated transcription"/>
    <property type="evidence" value="ECO:0000250"/>
    <property type="project" value="UniProtKB"/>
</dbReference>
<dbReference type="GO" id="GO:0030177">
    <property type="term" value="P:positive regulation of Wnt signaling pathway"/>
    <property type="evidence" value="ECO:0000250"/>
    <property type="project" value="UniProtKB"/>
</dbReference>
<dbReference type="GO" id="GO:0071168">
    <property type="term" value="P:protein localization to chromatin"/>
    <property type="evidence" value="ECO:0000250"/>
    <property type="project" value="UniProtKB"/>
</dbReference>
<dbReference type="GO" id="GO:0006355">
    <property type="term" value="P:regulation of DNA-templated transcription"/>
    <property type="evidence" value="ECO:0000318"/>
    <property type="project" value="GO_Central"/>
</dbReference>
<dbReference type="GO" id="GO:0009303">
    <property type="term" value="P:rRNA transcription"/>
    <property type="evidence" value="ECO:0000250"/>
    <property type="project" value="UniProtKB"/>
</dbReference>
<dbReference type="GO" id="GO:0141196">
    <property type="term" value="P:transposable element silencing by piRNA-mediated DNA methylation"/>
    <property type="evidence" value="ECO:0000250"/>
    <property type="project" value="UniProtKB"/>
</dbReference>
<dbReference type="GO" id="GO:0016055">
    <property type="term" value="P:Wnt signaling pathway"/>
    <property type="evidence" value="ECO:0007669"/>
    <property type="project" value="UniProtKB-KW"/>
</dbReference>
<dbReference type="FunFam" id="2.80.10.70:FF:000001">
    <property type="entry name" value="Spindlin 1"/>
    <property type="match status" value="1"/>
</dbReference>
<dbReference type="Gene3D" id="2.80.10.70">
    <property type="entry name" value="Spindlin/Ssty"/>
    <property type="match status" value="1"/>
</dbReference>
<dbReference type="InterPro" id="IPR003671">
    <property type="entry name" value="SPIN/Ssty"/>
</dbReference>
<dbReference type="InterPro" id="IPR042567">
    <property type="entry name" value="SPIN/Ssty_sf"/>
</dbReference>
<dbReference type="PANTHER" id="PTHR10405">
    <property type="entry name" value="SPINDLIN"/>
    <property type="match status" value="1"/>
</dbReference>
<dbReference type="Pfam" id="PF02513">
    <property type="entry name" value="Spin-Ssty"/>
    <property type="match status" value="3"/>
</dbReference>
<organism>
    <name type="scientific">Rattus norvegicus</name>
    <name type="common">Rat</name>
    <dbReference type="NCBI Taxonomy" id="10116"/>
    <lineage>
        <taxon>Eukaryota</taxon>
        <taxon>Metazoa</taxon>
        <taxon>Chordata</taxon>
        <taxon>Craniata</taxon>
        <taxon>Vertebrata</taxon>
        <taxon>Euteleostomi</taxon>
        <taxon>Mammalia</taxon>
        <taxon>Eutheria</taxon>
        <taxon>Euarchontoglires</taxon>
        <taxon>Glires</taxon>
        <taxon>Rodentia</taxon>
        <taxon>Myomorpha</taxon>
        <taxon>Muroidea</taxon>
        <taxon>Muridae</taxon>
        <taxon>Murinae</taxon>
        <taxon>Rattus</taxon>
    </lineage>
</organism>
<sequence>MKTPFGKTPGQRSRADAGHAGVSANMMKKRTSHKKHRTSVGPSKPVSQPRRNIVGCRIQHGWREGNGPVTQWKGTVLDQVPVNPSLYLIKYDGFDCVYGLELNKDDRVSALEVLPDRVATSRISDAHLADTMIGKAVEHMFETEDGSKDEWRGMVLARAPVMNTWFYITYEKDPVLYMYQLLDDYKEGDLRIMPDSNDSPPAEREPGEVVDSLVGKQVEYAKEDGSKRTGMVIHQVEAKPSVYFIKFDDDFHIYVYDLVKTS</sequence>
<protein>
    <recommendedName>
        <fullName>Spindlin-1</fullName>
    </recommendedName>
    <alternativeName>
        <fullName>Spindlin1</fullName>
    </alternativeName>
</protein>
<comment type="function">
    <text evidence="1 2">Chromatin reader that specifically recognizes and binds histone H3 both trimethylated at 'Lys-4' and 'Lys-9' (H3K4me3K9me3) and is involved in piRNA-mediated retrotransposon silencing during spermatogenesis. Plays a key role in the initiation of the PIWIL4-piRNA pathway, a pathway that directs transposon DNA methylation and silencing in the male embryonic germ cells, by promoting recruitment of DNA methylation machinery to transposons: binds young, but not old, LINE1 transposons, which are specifically marked with H3K4me3K9me3, and promotes the recruitment of PIWIL4 and SPOCD1 to transposons, leading to piRNA-directed DNA methylation (By similarity). Also recognizes and binds histone H3 both trimethylated at 'Lys-4' and asymmetrically dimethylated at 'Arg-8' (H3K4me3 and H3R8me2a) and acts as an activator of Wnt signaling pathway downstream of PRMT2 (By similarity). Overexpression induces metaphase arrest and chromosomal instability (By similarity). Overexpression induces metaphase arrest and chromosomal instability. Localizes to active rDNA loci and promotes the expression of rRNA genes (By similarity). May play a role in cell-cycle regulation during the transition from gamete to embryo. Involved in oocyte meiotic resumption, a process that takes place before ovulation to resume meiosis of oocytes blocked in prophase I: may act by regulating maternal transcripts to control meiotic resumption (By similarity).</text>
</comment>
<comment type="subunit">
    <text evidence="1 2">Homodimer; may form higher-order oligomers. Interacts with TCF7L2/TCF4; the interaction is direct (By similarity). Interacts with HABP4 and SERBP1 (By similarity). Interacts with SPINDOC; SPINDOC stabilizes SPIN1 and enhances its association with bivalent H3K4me3K9me3 mark (By similarity). Interacts with SPOCD1; promoting recruitment of PIWIL4 and SPOCD1 to transposons (By similarity).</text>
</comment>
<comment type="subcellular location">
    <subcellularLocation>
        <location evidence="2">Nucleus</location>
    </subcellularLocation>
    <subcellularLocation>
        <location evidence="2">Nucleus</location>
        <location evidence="2">Nucleolus</location>
    </subcellularLocation>
</comment>
<comment type="domain">
    <text evidence="2">The 3 tudor-like domains (also named Spin/Ssty repeats) specifically recognize and bind methylated histones. H3K4me3 and H3R8me2a are recognized by tudor-like domains 2 and 1, respectively.</text>
</comment>
<comment type="PTM">
    <text evidence="1">Phosphorylated during oocyte meiotic maturation.</text>
</comment>
<comment type="similarity">
    <text evidence="4">Belongs to the SPIN/STSY family.</text>
</comment>